<feature type="chain" id="PRO_0000171280" description="o-succinylbenzoate synthase">
    <location>
        <begin position="1"/>
        <end position="326"/>
    </location>
</feature>
<feature type="active site" description="Proton donor" evidence="1">
    <location>
        <position position="110"/>
    </location>
</feature>
<feature type="active site" description="Proton acceptor" evidence="1">
    <location>
        <position position="212"/>
    </location>
</feature>
<feature type="binding site" evidence="1">
    <location>
        <position position="138"/>
    </location>
    <ligand>
        <name>Mg(2+)</name>
        <dbReference type="ChEBI" id="CHEBI:18420"/>
    </ligand>
</feature>
<feature type="binding site" evidence="1">
    <location>
        <position position="165"/>
    </location>
    <ligand>
        <name>Mg(2+)</name>
        <dbReference type="ChEBI" id="CHEBI:18420"/>
    </ligand>
</feature>
<feature type="binding site" evidence="1">
    <location>
        <position position="188"/>
    </location>
    <ligand>
        <name>Mg(2+)</name>
        <dbReference type="ChEBI" id="CHEBI:18420"/>
    </ligand>
</feature>
<reference key="1">
    <citation type="journal article" date="2003" name="Proc. Natl. Acad. Sci. U.S.A.">
        <title>The complete genome sequence of Mycobacterium bovis.</title>
        <authorList>
            <person name="Garnier T."/>
            <person name="Eiglmeier K."/>
            <person name="Camus J.-C."/>
            <person name="Medina N."/>
            <person name="Mansoor H."/>
            <person name="Pryor M."/>
            <person name="Duthoy S."/>
            <person name="Grondin S."/>
            <person name="Lacroix C."/>
            <person name="Monsempe C."/>
            <person name="Simon S."/>
            <person name="Harris B."/>
            <person name="Atkin R."/>
            <person name="Doggett J."/>
            <person name="Mayes R."/>
            <person name="Keating L."/>
            <person name="Wheeler P.R."/>
            <person name="Parkhill J."/>
            <person name="Barrell B.G."/>
            <person name="Cole S.T."/>
            <person name="Gordon S.V."/>
            <person name="Hewinson R.G."/>
        </authorList>
    </citation>
    <scope>NUCLEOTIDE SEQUENCE [LARGE SCALE GENOMIC DNA]</scope>
    <source>
        <strain>ATCC BAA-935 / AF2122/97</strain>
    </source>
</reference>
<reference key="2">
    <citation type="journal article" date="2017" name="Genome Announc.">
        <title>Updated reference genome sequence and annotation of Mycobacterium bovis AF2122/97.</title>
        <authorList>
            <person name="Malone K.M."/>
            <person name="Farrell D."/>
            <person name="Stuber T.P."/>
            <person name="Schubert O.T."/>
            <person name="Aebersold R."/>
            <person name="Robbe-Austerman S."/>
            <person name="Gordon S.V."/>
        </authorList>
    </citation>
    <scope>NUCLEOTIDE SEQUENCE [LARGE SCALE GENOMIC DNA]</scope>
    <scope>GENOME REANNOTATION</scope>
    <source>
        <strain>ATCC BAA-935 / AF2122/97</strain>
    </source>
</reference>
<organism>
    <name type="scientific">Mycobacterium bovis (strain ATCC BAA-935 / AF2122/97)</name>
    <dbReference type="NCBI Taxonomy" id="233413"/>
    <lineage>
        <taxon>Bacteria</taxon>
        <taxon>Bacillati</taxon>
        <taxon>Actinomycetota</taxon>
        <taxon>Actinomycetes</taxon>
        <taxon>Mycobacteriales</taxon>
        <taxon>Mycobacteriaceae</taxon>
        <taxon>Mycobacterium</taxon>
        <taxon>Mycobacterium tuberculosis complex</taxon>
    </lineage>
</organism>
<accession>P65426</accession>
<accession>A0A1R3XVT1</accession>
<accession>O06419</accession>
<accession>X2BFD4</accession>
<gene>
    <name evidence="1" type="primary">menC</name>
    <name type="ordered locus">BQ2027_MB0568</name>
</gene>
<evidence type="ECO:0000255" key="1">
    <source>
        <dbReference type="HAMAP-Rule" id="MF_00470"/>
    </source>
</evidence>
<comment type="function">
    <text evidence="1">Converts 2-succinyl-6-hydroxy-2,4-cyclohexadiene-1-carboxylate (SHCHC) to 2-succinylbenzoate (OSB).</text>
</comment>
<comment type="catalytic activity">
    <reaction evidence="1">
        <text>(1R,6R)-6-hydroxy-2-succinyl-cyclohexa-2,4-diene-1-carboxylate = 2-succinylbenzoate + H2O</text>
        <dbReference type="Rhea" id="RHEA:10196"/>
        <dbReference type="ChEBI" id="CHEBI:15377"/>
        <dbReference type="ChEBI" id="CHEBI:18325"/>
        <dbReference type="ChEBI" id="CHEBI:58689"/>
        <dbReference type="EC" id="4.2.1.113"/>
    </reaction>
</comment>
<comment type="cofactor">
    <cofactor evidence="1">
        <name>a divalent metal cation</name>
        <dbReference type="ChEBI" id="CHEBI:60240"/>
    </cofactor>
</comment>
<comment type="pathway">
    <text evidence="1">Quinol/quinone metabolism; 1,4-dihydroxy-2-naphthoate biosynthesis; 1,4-dihydroxy-2-naphthoate from chorismate: step 4/7.</text>
</comment>
<comment type="pathway">
    <text evidence="1">Quinol/quinone metabolism; menaquinone biosynthesis.</text>
</comment>
<comment type="similarity">
    <text evidence="1">Belongs to the mandelate racemase/muconate lactonizing enzyme family. MenC type 1 subfamily.</text>
</comment>
<name>MENC_MYCBO</name>
<protein>
    <recommendedName>
        <fullName evidence="1">o-succinylbenzoate synthase</fullName>
        <shortName evidence="1">OSB synthase</shortName>
        <shortName evidence="1">OSBS</shortName>
        <ecNumber evidence="1">4.2.1.113</ecNumber>
    </recommendedName>
    <alternativeName>
        <fullName evidence="1">4-(2'-carboxyphenyl)-4-oxybutyric acid synthase</fullName>
    </alternativeName>
    <alternativeName>
        <fullName evidence="1">o-succinylbenzoic acid synthase</fullName>
    </alternativeName>
</protein>
<sequence>MIPVLPPLEALLDRLYVVALPMRVRFRGITTREVALIEGPAGWGEFGAFVEYQSAQACAWLASAIETAYCAPPPVRRDRVPINATVPAVAAAQVGEVLARFPGARTAKVKVAEPGQSLADDIERVNAVRELVPMVRVDANGGWGVAEAVAAAAALTADGPLEYLEQPCATVAELAELRRRVDVPIAADESIRKAEDPLAVVRAQAADIAVLKVAPLGGISALLDIAARIAVPVVVSSALDSAVGIAAGLTAAAALPELDHACGLGTGGLFEEDVAEPAAPVDGFLAVARTTPDPARLQALGAPPQRRQWWIDRVKACYSLLVPSFG</sequence>
<proteinExistence type="inferred from homology"/>
<dbReference type="EC" id="4.2.1.113" evidence="1"/>
<dbReference type="EMBL" id="LT708304">
    <property type="protein sequence ID" value="SIT99164.1"/>
    <property type="molecule type" value="Genomic_DNA"/>
</dbReference>
<dbReference type="RefSeq" id="NP_854228.1">
    <property type="nucleotide sequence ID" value="NC_002945.3"/>
</dbReference>
<dbReference type="RefSeq" id="WP_003402923.1">
    <property type="nucleotide sequence ID" value="NC_002945.4"/>
</dbReference>
<dbReference type="SMR" id="P65426"/>
<dbReference type="PATRIC" id="fig|233413.5.peg.616"/>
<dbReference type="UniPathway" id="UPA00079"/>
<dbReference type="UniPathway" id="UPA01057">
    <property type="reaction ID" value="UER00165"/>
</dbReference>
<dbReference type="Proteomes" id="UP000001419">
    <property type="component" value="Chromosome"/>
</dbReference>
<dbReference type="GO" id="GO:0000287">
    <property type="term" value="F:magnesium ion binding"/>
    <property type="evidence" value="ECO:0007669"/>
    <property type="project" value="UniProtKB-UniRule"/>
</dbReference>
<dbReference type="GO" id="GO:0043748">
    <property type="term" value="F:O-succinylbenzoate synthase activity"/>
    <property type="evidence" value="ECO:0007669"/>
    <property type="project" value="UniProtKB-EC"/>
</dbReference>
<dbReference type="GO" id="GO:0009234">
    <property type="term" value="P:menaquinone biosynthetic process"/>
    <property type="evidence" value="ECO:0007669"/>
    <property type="project" value="UniProtKB-UniRule"/>
</dbReference>
<dbReference type="CDD" id="cd03320">
    <property type="entry name" value="OSBS"/>
    <property type="match status" value="1"/>
</dbReference>
<dbReference type="Gene3D" id="3.20.20.120">
    <property type="entry name" value="Enolase-like C-terminal domain"/>
    <property type="match status" value="1"/>
</dbReference>
<dbReference type="HAMAP" id="MF_00470">
    <property type="entry name" value="MenC_1"/>
    <property type="match status" value="1"/>
</dbReference>
<dbReference type="InterPro" id="IPR036849">
    <property type="entry name" value="Enolase-like_C_sf"/>
</dbReference>
<dbReference type="InterPro" id="IPR029065">
    <property type="entry name" value="Enolase_C-like"/>
</dbReference>
<dbReference type="InterPro" id="IPR013342">
    <property type="entry name" value="Mandelate_racemase_C"/>
</dbReference>
<dbReference type="InterPro" id="IPR010196">
    <property type="entry name" value="OSB_synthase_MenC1"/>
</dbReference>
<dbReference type="NCBIfam" id="NF002782">
    <property type="entry name" value="PRK02901.1"/>
    <property type="match status" value="1"/>
</dbReference>
<dbReference type="PANTHER" id="PTHR48073:SF2">
    <property type="entry name" value="O-SUCCINYLBENZOATE SYNTHASE"/>
    <property type="match status" value="1"/>
</dbReference>
<dbReference type="PANTHER" id="PTHR48073">
    <property type="entry name" value="O-SUCCINYLBENZOATE SYNTHASE-RELATED"/>
    <property type="match status" value="1"/>
</dbReference>
<dbReference type="Pfam" id="PF18374">
    <property type="entry name" value="Enolase_like_N"/>
    <property type="match status" value="1"/>
</dbReference>
<dbReference type="Pfam" id="PF13378">
    <property type="entry name" value="MR_MLE_C"/>
    <property type="match status" value="1"/>
</dbReference>
<dbReference type="SFLD" id="SFLDG00180">
    <property type="entry name" value="muconate_cycloisomerase"/>
    <property type="match status" value="1"/>
</dbReference>
<dbReference type="SFLD" id="SFLDF00009">
    <property type="entry name" value="o-succinylbenzoate_synthase"/>
    <property type="match status" value="1"/>
</dbReference>
<dbReference type="SMART" id="SM00922">
    <property type="entry name" value="MR_MLE"/>
    <property type="match status" value="1"/>
</dbReference>
<dbReference type="SUPFAM" id="SSF51604">
    <property type="entry name" value="Enolase C-terminal domain-like"/>
    <property type="match status" value="1"/>
</dbReference>
<keyword id="KW-0456">Lyase</keyword>
<keyword id="KW-0460">Magnesium</keyword>
<keyword id="KW-0474">Menaquinone biosynthesis</keyword>
<keyword id="KW-0479">Metal-binding</keyword>
<keyword id="KW-1185">Reference proteome</keyword>